<gene>
    <name evidence="1" type="primary">atpH</name>
    <name type="ordered locus">Mmwyl1_4465</name>
</gene>
<evidence type="ECO:0000255" key="1">
    <source>
        <dbReference type="HAMAP-Rule" id="MF_01416"/>
    </source>
</evidence>
<accession>A6W3T1</accession>
<keyword id="KW-0066">ATP synthesis</keyword>
<keyword id="KW-0997">Cell inner membrane</keyword>
<keyword id="KW-1003">Cell membrane</keyword>
<keyword id="KW-0139">CF(1)</keyword>
<keyword id="KW-0375">Hydrogen ion transport</keyword>
<keyword id="KW-0406">Ion transport</keyword>
<keyword id="KW-0472">Membrane</keyword>
<keyword id="KW-0813">Transport</keyword>
<comment type="function">
    <text evidence="1">F(1)F(0) ATP synthase produces ATP from ADP in the presence of a proton or sodium gradient. F-type ATPases consist of two structural domains, F(1) containing the extramembraneous catalytic core and F(0) containing the membrane proton channel, linked together by a central stalk and a peripheral stalk. During catalysis, ATP synthesis in the catalytic domain of F(1) is coupled via a rotary mechanism of the central stalk subunits to proton translocation.</text>
</comment>
<comment type="function">
    <text evidence="1">This protein is part of the stalk that links CF(0) to CF(1). It either transmits conformational changes from CF(0) to CF(1) or is implicated in proton conduction.</text>
</comment>
<comment type="subunit">
    <text evidence="1">F-type ATPases have 2 components, F(1) - the catalytic core - and F(0) - the membrane proton channel. F(1) has five subunits: alpha(3), beta(3), gamma(1), delta(1), epsilon(1). F(0) has three main subunits: a(1), b(2) and c(10-14). The alpha and beta chains form an alternating ring which encloses part of the gamma chain. F(1) is attached to F(0) by a central stalk formed by the gamma and epsilon chains, while a peripheral stalk is formed by the delta and b chains.</text>
</comment>
<comment type="subcellular location">
    <subcellularLocation>
        <location evidence="1">Cell inner membrane</location>
        <topology evidence="1">Peripheral membrane protein</topology>
    </subcellularLocation>
</comment>
<comment type="similarity">
    <text evidence="1">Belongs to the ATPase delta chain family.</text>
</comment>
<organism>
    <name type="scientific">Marinomonas sp. (strain MWYL1)</name>
    <dbReference type="NCBI Taxonomy" id="400668"/>
    <lineage>
        <taxon>Bacteria</taxon>
        <taxon>Pseudomonadati</taxon>
        <taxon>Pseudomonadota</taxon>
        <taxon>Gammaproteobacteria</taxon>
        <taxon>Oceanospirillales</taxon>
        <taxon>Oceanospirillaceae</taxon>
        <taxon>Marinomonas</taxon>
    </lineage>
</organism>
<reference key="1">
    <citation type="submission" date="2007-06" db="EMBL/GenBank/DDBJ databases">
        <title>Complete sequence of Marinomonas sp. MWYL1.</title>
        <authorList>
            <consortium name="US DOE Joint Genome Institute"/>
            <person name="Copeland A."/>
            <person name="Lucas S."/>
            <person name="Lapidus A."/>
            <person name="Barry K."/>
            <person name="Glavina del Rio T."/>
            <person name="Dalin E."/>
            <person name="Tice H."/>
            <person name="Pitluck S."/>
            <person name="Kiss H."/>
            <person name="Brettin T."/>
            <person name="Bruce D."/>
            <person name="Detter J.C."/>
            <person name="Han C."/>
            <person name="Schmutz J."/>
            <person name="Larimer F."/>
            <person name="Land M."/>
            <person name="Hauser L."/>
            <person name="Kyrpides N."/>
            <person name="Kim E."/>
            <person name="Johnston A.W.B."/>
            <person name="Todd J.D."/>
            <person name="Rogers R."/>
            <person name="Wexler M."/>
            <person name="Bond P.L."/>
            <person name="Li Y."/>
            <person name="Richardson P."/>
        </authorList>
    </citation>
    <scope>NUCLEOTIDE SEQUENCE [LARGE SCALE GENOMIC DNA]</scope>
    <source>
        <strain>MWYL1</strain>
    </source>
</reference>
<dbReference type="EMBL" id="CP000749">
    <property type="protein sequence ID" value="ABR73360.1"/>
    <property type="molecule type" value="Genomic_DNA"/>
</dbReference>
<dbReference type="SMR" id="A6W3T1"/>
<dbReference type="STRING" id="400668.Mmwyl1_4465"/>
<dbReference type="KEGG" id="mmw:Mmwyl1_4465"/>
<dbReference type="eggNOG" id="COG0712">
    <property type="taxonomic scope" value="Bacteria"/>
</dbReference>
<dbReference type="HOGENOM" id="CLU_085114_3_0_6"/>
<dbReference type="OrthoDB" id="9816221at2"/>
<dbReference type="GO" id="GO:0005886">
    <property type="term" value="C:plasma membrane"/>
    <property type="evidence" value="ECO:0007669"/>
    <property type="project" value="UniProtKB-SubCell"/>
</dbReference>
<dbReference type="GO" id="GO:0045259">
    <property type="term" value="C:proton-transporting ATP synthase complex"/>
    <property type="evidence" value="ECO:0007669"/>
    <property type="project" value="UniProtKB-KW"/>
</dbReference>
<dbReference type="GO" id="GO:0046933">
    <property type="term" value="F:proton-transporting ATP synthase activity, rotational mechanism"/>
    <property type="evidence" value="ECO:0007669"/>
    <property type="project" value="UniProtKB-UniRule"/>
</dbReference>
<dbReference type="Gene3D" id="1.10.520.20">
    <property type="entry name" value="N-terminal domain of the delta subunit of the F1F0-ATP synthase"/>
    <property type="match status" value="1"/>
</dbReference>
<dbReference type="HAMAP" id="MF_01416">
    <property type="entry name" value="ATP_synth_delta_bact"/>
    <property type="match status" value="1"/>
</dbReference>
<dbReference type="InterPro" id="IPR026015">
    <property type="entry name" value="ATP_synth_OSCP/delta_N_sf"/>
</dbReference>
<dbReference type="InterPro" id="IPR020781">
    <property type="entry name" value="ATPase_OSCP/d_CS"/>
</dbReference>
<dbReference type="InterPro" id="IPR000711">
    <property type="entry name" value="ATPase_OSCP/dsu"/>
</dbReference>
<dbReference type="NCBIfam" id="TIGR01145">
    <property type="entry name" value="ATP_synt_delta"/>
    <property type="match status" value="1"/>
</dbReference>
<dbReference type="NCBIfam" id="NF004402">
    <property type="entry name" value="PRK05758.2-2"/>
    <property type="match status" value="1"/>
</dbReference>
<dbReference type="PANTHER" id="PTHR11910">
    <property type="entry name" value="ATP SYNTHASE DELTA CHAIN"/>
    <property type="match status" value="1"/>
</dbReference>
<dbReference type="Pfam" id="PF00213">
    <property type="entry name" value="OSCP"/>
    <property type="match status" value="1"/>
</dbReference>
<dbReference type="PRINTS" id="PR00125">
    <property type="entry name" value="ATPASEDELTA"/>
</dbReference>
<dbReference type="SUPFAM" id="SSF47928">
    <property type="entry name" value="N-terminal domain of the delta subunit of the F1F0-ATP synthase"/>
    <property type="match status" value="1"/>
</dbReference>
<dbReference type="PROSITE" id="PS00389">
    <property type="entry name" value="ATPASE_DELTA"/>
    <property type="match status" value="1"/>
</dbReference>
<proteinExistence type="inferred from homology"/>
<name>ATPD_MARMS</name>
<feature type="chain" id="PRO_0000371022" description="ATP synthase subunit delta">
    <location>
        <begin position="1"/>
        <end position="178"/>
    </location>
</feature>
<protein>
    <recommendedName>
        <fullName evidence="1">ATP synthase subunit delta</fullName>
    </recommendedName>
    <alternativeName>
        <fullName evidence="1">ATP synthase F(1) sector subunit delta</fullName>
    </alternativeName>
    <alternativeName>
        <fullName evidence="1">F-type ATPase subunit delta</fullName>
        <shortName evidence="1">F-ATPase subunit delta</shortName>
    </alternativeName>
</protein>
<sequence>MAELKTVARPYAKAVFEVAREQGHIVEWADMLNVLASVTVEPKLKKALGNPAFSAEEKANALADVCAEVTTEQGKAFLLALAVNKRLSLLPAISELFLQFKLNFEKAVNVQFTSAFELTAEQTQALAASLAKKLDRTVNLTSETDASLIGGVVIRTGDLIIDGSVRGKLAKLAEAINS</sequence>